<organism>
    <name type="scientific">Staphylococcus aureus (strain MRSA252)</name>
    <dbReference type="NCBI Taxonomy" id="282458"/>
    <lineage>
        <taxon>Bacteria</taxon>
        <taxon>Bacillati</taxon>
        <taxon>Bacillota</taxon>
        <taxon>Bacilli</taxon>
        <taxon>Bacillales</taxon>
        <taxon>Staphylococcaceae</taxon>
        <taxon>Staphylococcus</taxon>
    </lineage>
</organism>
<accession>Q6GH76</accession>
<evidence type="ECO:0000255" key="1">
    <source>
        <dbReference type="HAMAP-Rule" id="MF_00384"/>
    </source>
</evidence>
<name>KHSE_STAAR</name>
<protein>
    <recommendedName>
        <fullName evidence="1">Homoserine kinase</fullName>
        <shortName evidence="1">HK</shortName>
        <shortName evidence="1">HSK</shortName>
        <ecNumber evidence="1">2.7.1.39</ecNumber>
    </recommendedName>
</protein>
<dbReference type="EC" id="2.7.1.39" evidence="1"/>
<dbReference type="EMBL" id="BX571856">
    <property type="protein sequence ID" value="CAG40339.1"/>
    <property type="molecule type" value="Genomic_DNA"/>
</dbReference>
<dbReference type="RefSeq" id="WP_000073177.1">
    <property type="nucleotide sequence ID" value="NC_002952.2"/>
</dbReference>
<dbReference type="SMR" id="Q6GH76"/>
<dbReference type="KEGG" id="sar:SAR1340"/>
<dbReference type="HOGENOM" id="CLU_041243_0_0_9"/>
<dbReference type="UniPathway" id="UPA00050">
    <property type="reaction ID" value="UER00064"/>
</dbReference>
<dbReference type="Proteomes" id="UP000000596">
    <property type="component" value="Chromosome"/>
</dbReference>
<dbReference type="GO" id="GO:0005737">
    <property type="term" value="C:cytoplasm"/>
    <property type="evidence" value="ECO:0007669"/>
    <property type="project" value="UniProtKB-SubCell"/>
</dbReference>
<dbReference type="GO" id="GO:0005524">
    <property type="term" value="F:ATP binding"/>
    <property type="evidence" value="ECO:0007669"/>
    <property type="project" value="UniProtKB-UniRule"/>
</dbReference>
<dbReference type="GO" id="GO:0004413">
    <property type="term" value="F:homoserine kinase activity"/>
    <property type="evidence" value="ECO:0007669"/>
    <property type="project" value="UniProtKB-UniRule"/>
</dbReference>
<dbReference type="GO" id="GO:0009088">
    <property type="term" value="P:threonine biosynthetic process"/>
    <property type="evidence" value="ECO:0007669"/>
    <property type="project" value="UniProtKB-UniRule"/>
</dbReference>
<dbReference type="Gene3D" id="3.30.230.10">
    <property type="match status" value="1"/>
</dbReference>
<dbReference type="Gene3D" id="3.30.70.890">
    <property type="entry name" value="GHMP kinase, C-terminal domain"/>
    <property type="match status" value="1"/>
</dbReference>
<dbReference type="HAMAP" id="MF_00384">
    <property type="entry name" value="Homoser_kinase"/>
    <property type="match status" value="1"/>
</dbReference>
<dbReference type="InterPro" id="IPR013750">
    <property type="entry name" value="GHMP_kinase_C_dom"/>
</dbReference>
<dbReference type="InterPro" id="IPR036554">
    <property type="entry name" value="GHMP_kinase_C_sf"/>
</dbReference>
<dbReference type="InterPro" id="IPR006204">
    <property type="entry name" value="GHMP_kinase_N_dom"/>
</dbReference>
<dbReference type="InterPro" id="IPR006203">
    <property type="entry name" value="GHMP_knse_ATP-bd_CS"/>
</dbReference>
<dbReference type="InterPro" id="IPR000870">
    <property type="entry name" value="Homoserine_kinase"/>
</dbReference>
<dbReference type="InterPro" id="IPR020568">
    <property type="entry name" value="Ribosomal_Su5_D2-typ_SF"/>
</dbReference>
<dbReference type="InterPro" id="IPR014721">
    <property type="entry name" value="Ribsml_uS5_D2-typ_fold_subgr"/>
</dbReference>
<dbReference type="NCBIfam" id="TIGR00191">
    <property type="entry name" value="thrB"/>
    <property type="match status" value="1"/>
</dbReference>
<dbReference type="PANTHER" id="PTHR20861:SF1">
    <property type="entry name" value="HOMOSERINE KINASE"/>
    <property type="match status" value="1"/>
</dbReference>
<dbReference type="PANTHER" id="PTHR20861">
    <property type="entry name" value="HOMOSERINE/4-DIPHOSPHOCYTIDYL-2-C-METHYL-D-ERYTHRITOL KINASE"/>
    <property type="match status" value="1"/>
</dbReference>
<dbReference type="Pfam" id="PF08544">
    <property type="entry name" value="GHMP_kinases_C"/>
    <property type="match status" value="1"/>
</dbReference>
<dbReference type="Pfam" id="PF00288">
    <property type="entry name" value="GHMP_kinases_N"/>
    <property type="match status" value="1"/>
</dbReference>
<dbReference type="PIRSF" id="PIRSF000676">
    <property type="entry name" value="Homoser_kin"/>
    <property type="match status" value="1"/>
</dbReference>
<dbReference type="PRINTS" id="PR00958">
    <property type="entry name" value="HOMSERKINASE"/>
</dbReference>
<dbReference type="SUPFAM" id="SSF55060">
    <property type="entry name" value="GHMP Kinase, C-terminal domain"/>
    <property type="match status" value="1"/>
</dbReference>
<dbReference type="SUPFAM" id="SSF54211">
    <property type="entry name" value="Ribosomal protein S5 domain 2-like"/>
    <property type="match status" value="1"/>
</dbReference>
<dbReference type="PROSITE" id="PS00627">
    <property type="entry name" value="GHMP_KINASES_ATP"/>
    <property type="match status" value="1"/>
</dbReference>
<comment type="function">
    <text evidence="1">Catalyzes the ATP-dependent phosphorylation of L-homoserine to L-homoserine phosphate.</text>
</comment>
<comment type="catalytic activity">
    <reaction evidence="1">
        <text>L-homoserine + ATP = O-phospho-L-homoserine + ADP + H(+)</text>
        <dbReference type="Rhea" id="RHEA:13985"/>
        <dbReference type="ChEBI" id="CHEBI:15378"/>
        <dbReference type="ChEBI" id="CHEBI:30616"/>
        <dbReference type="ChEBI" id="CHEBI:57476"/>
        <dbReference type="ChEBI" id="CHEBI:57590"/>
        <dbReference type="ChEBI" id="CHEBI:456216"/>
        <dbReference type="EC" id="2.7.1.39"/>
    </reaction>
</comment>
<comment type="pathway">
    <text evidence="1">Amino-acid biosynthesis; L-threonine biosynthesis; L-threonine from L-aspartate: step 4/5.</text>
</comment>
<comment type="subcellular location">
    <subcellularLocation>
        <location evidence="1">Cytoplasm</location>
    </subcellularLocation>
</comment>
<comment type="similarity">
    <text evidence="1">Belongs to the GHMP kinase family. Homoserine kinase subfamily.</text>
</comment>
<feature type="chain" id="PRO_0000156607" description="Homoserine kinase">
    <location>
        <begin position="1"/>
        <end position="304"/>
    </location>
</feature>
<feature type="binding site" evidence="1">
    <location>
        <begin position="90"/>
        <end position="100"/>
    </location>
    <ligand>
        <name>ATP</name>
        <dbReference type="ChEBI" id="CHEBI:30616"/>
    </ligand>
</feature>
<keyword id="KW-0028">Amino-acid biosynthesis</keyword>
<keyword id="KW-0067">ATP-binding</keyword>
<keyword id="KW-0963">Cytoplasm</keyword>
<keyword id="KW-0418">Kinase</keyword>
<keyword id="KW-0547">Nucleotide-binding</keyword>
<keyword id="KW-0791">Threonine biosynthesis</keyword>
<keyword id="KW-0808">Transferase</keyword>
<proteinExistence type="inferred from homology"/>
<sequence>MSNVLELTIPASTANLGVGFDSIGMALDKFLHLSVKETSGTKWEYIFHDDASKQLPTDETNFIYHVAQQVAAKYSVDLPNLCIEMRSDIPLARGLGSSASALVGAIYIANYFGDIQLSKHEVLQLATEIEGHPDNVAPTIYGGLIAGYYNDVTKETSVAHIDIPDVDVIVTIPTYELKTEASRRALPQKLTHSEAVKSSAISNTMICALAQHNYELAGKLMQQDGFHEPYRQHLIAEFDEVKTIASQHNAYATVISGAGPTILIFSRKENSGELVRALNRNVVTCHSELVDINVSGVKERIVYQ</sequence>
<gene>
    <name evidence="1" type="primary">thrB</name>
    <name type="ordered locus">SAR1340</name>
</gene>
<reference key="1">
    <citation type="journal article" date="2004" name="Proc. Natl. Acad. Sci. U.S.A.">
        <title>Complete genomes of two clinical Staphylococcus aureus strains: evidence for the rapid evolution of virulence and drug resistance.</title>
        <authorList>
            <person name="Holden M.T.G."/>
            <person name="Feil E.J."/>
            <person name="Lindsay J.A."/>
            <person name="Peacock S.J."/>
            <person name="Day N.P.J."/>
            <person name="Enright M.C."/>
            <person name="Foster T.J."/>
            <person name="Moore C.E."/>
            <person name="Hurst L."/>
            <person name="Atkin R."/>
            <person name="Barron A."/>
            <person name="Bason N."/>
            <person name="Bentley S.D."/>
            <person name="Chillingworth C."/>
            <person name="Chillingworth T."/>
            <person name="Churcher C."/>
            <person name="Clark L."/>
            <person name="Corton C."/>
            <person name="Cronin A."/>
            <person name="Doggett J."/>
            <person name="Dowd L."/>
            <person name="Feltwell T."/>
            <person name="Hance Z."/>
            <person name="Harris B."/>
            <person name="Hauser H."/>
            <person name="Holroyd S."/>
            <person name="Jagels K."/>
            <person name="James K.D."/>
            <person name="Lennard N."/>
            <person name="Line A."/>
            <person name="Mayes R."/>
            <person name="Moule S."/>
            <person name="Mungall K."/>
            <person name="Ormond D."/>
            <person name="Quail M.A."/>
            <person name="Rabbinowitsch E."/>
            <person name="Rutherford K.M."/>
            <person name="Sanders M."/>
            <person name="Sharp S."/>
            <person name="Simmonds M."/>
            <person name="Stevens K."/>
            <person name="Whitehead S."/>
            <person name="Barrell B.G."/>
            <person name="Spratt B.G."/>
            <person name="Parkhill J."/>
        </authorList>
    </citation>
    <scope>NUCLEOTIDE SEQUENCE [LARGE SCALE GENOMIC DNA]</scope>
    <source>
        <strain>MRSA252</strain>
    </source>
</reference>